<name>PAN2_NEUCR</name>
<reference key="1">
    <citation type="journal article" date="2003" name="Nature">
        <title>The genome sequence of the filamentous fungus Neurospora crassa.</title>
        <authorList>
            <person name="Galagan J.E."/>
            <person name="Calvo S.E."/>
            <person name="Borkovich K.A."/>
            <person name="Selker E.U."/>
            <person name="Read N.D."/>
            <person name="Jaffe D.B."/>
            <person name="FitzHugh W."/>
            <person name="Ma L.-J."/>
            <person name="Smirnov S."/>
            <person name="Purcell S."/>
            <person name="Rehman B."/>
            <person name="Elkins T."/>
            <person name="Engels R."/>
            <person name="Wang S."/>
            <person name="Nielsen C.B."/>
            <person name="Butler J."/>
            <person name="Endrizzi M."/>
            <person name="Qui D."/>
            <person name="Ianakiev P."/>
            <person name="Bell-Pedersen D."/>
            <person name="Nelson M.A."/>
            <person name="Werner-Washburne M."/>
            <person name="Selitrennikoff C.P."/>
            <person name="Kinsey J.A."/>
            <person name="Braun E.L."/>
            <person name="Zelter A."/>
            <person name="Schulte U."/>
            <person name="Kothe G.O."/>
            <person name="Jedd G."/>
            <person name="Mewes H.-W."/>
            <person name="Staben C."/>
            <person name="Marcotte E."/>
            <person name="Greenberg D."/>
            <person name="Roy A."/>
            <person name="Foley K."/>
            <person name="Naylor J."/>
            <person name="Stange-Thomann N."/>
            <person name="Barrett R."/>
            <person name="Gnerre S."/>
            <person name="Kamal M."/>
            <person name="Kamvysselis M."/>
            <person name="Mauceli E.W."/>
            <person name="Bielke C."/>
            <person name="Rudd S."/>
            <person name="Frishman D."/>
            <person name="Krystofova S."/>
            <person name="Rasmussen C."/>
            <person name="Metzenberg R.L."/>
            <person name="Perkins D.D."/>
            <person name="Kroken S."/>
            <person name="Cogoni C."/>
            <person name="Macino G."/>
            <person name="Catcheside D.E.A."/>
            <person name="Li W."/>
            <person name="Pratt R.J."/>
            <person name="Osmani S.A."/>
            <person name="DeSouza C.P.C."/>
            <person name="Glass N.L."/>
            <person name="Orbach M.J."/>
            <person name="Berglund J.A."/>
            <person name="Voelker R."/>
            <person name="Yarden O."/>
            <person name="Plamann M."/>
            <person name="Seiler S."/>
            <person name="Dunlap J.C."/>
            <person name="Radford A."/>
            <person name="Aramayo R."/>
            <person name="Natvig D.O."/>
            <person name="Alex L.A."/>
            <person name="Mannhaupt G."/>
            <person name="Ebbole D.J."/>
            <person name="Freitag M."/>
            <person name="Paulsen I."/>
            <person name="Sachs M.S."/>
            <person name="Lander E.S."/>
            <person name="Nusbaum C."/>
            <person name="Birren B.W."/>
        </authorList>
    </citation>
    <scope>NUCLEOTIDE SEQUENCE [LARGE SCALE GENOMIC DNA]</scope>
    <source>
        <strain>ATCC 24698 / 74-OR23-1A / CBS 708.71 / DSM 1257 / FGSC 987</strain>
    </source>
</reference>
<reference key="2">
    <citation type="journal article" date="2014" name="Nat. Struct. Mol. Biol.">
        <title>An asymmetric PAN3 dimer recruits a single PAN2 exonuclease to mediate mRNA deadenylation and decay.</title>
        <authorList>
            <person name="Jonas S."/>
            <person name="Christie M."/>
            <person name="Peter D."/>
            <person name="Bhandari D."/>
            <person name="Loh B."/>
            <person name="Huntzinger E."/>
            <person name="Weichenrieder O."/>
            <person name="Izaurralde E."/>
        </authorList>
    </citation>
    <scope>X-RAY CRYSTALLOGRAPHY (1.85 ANGSTROMS) OF 1-351 AND 456-1100 IN COMPLEX WITH ZINC</scope>
    <scope>SUBUNIT</scope>
</reference>
<comment type="function">
    <text evidence="3">Catalytic subunit of the poly(A)-nuclease (PAN) deadenylation complex, one of two cytoplasmic mRNA deadenylases involved in mRNA turnover. PAN specifically shortens poly(A) tails of RNA and the activity is stimulated by poly(A)-binding protein pabp-1. PAN deadenylation is followed by rapid degradation of the shortened mRNA tails by the CCR4-NOT complex. Deadenylated mRNAs are then degraded by two alternative mechanisms, namely exosome-mediated 3'-5' exonucleolytic degradation, or deadenylation-dependent mRNA decaping and subsequent 5'-3' exonucleolytic degradation by rgb-30/xrn1. May also be involved in post-transcriptional maturation of mRNA poly(A) tails.</text>
</comment>
<comment type="catalytic activity">
    <reaction evidence="3">
        <text>Exonucleolytic cleavage of poly(A) to 5'-AMP.</text>
        <dbReference type="EC" id="3.1.13.4"/>
    </reaction>
</comment>
<comment type="cofactor">
    <cofactor evidence="3">
        <name>a divalent metal cation</name>
        <dbReference type="ChEBI" id="CHEBI:60240"/>
    </cofactor>
    <text evidence="3">Binds 2 metal cations per subunit in the catalytic exonuclease domain.</text>
</comment>
<comment type="activity regulation">
    <text evidence="1 3">Positively regulated by the regulatory subunit par-2/pan3.</text>
</comment>
<comment type="subunit">
    <text evidence="3 5">Forms a heterotrimer with an asymmetric homodimer of the regulatory subunit par-2/pan3 to form the poly(A)-nuclease (PAN) deadenylation complex.</text>
</comment>
<comment type="interaction">
    <interactant intactId="EBI-16108085">
        <id>P0C581</id>
    </interactant>
    <interactant intactId="EBI-16108116">
        <id>Q7SDP4</id>
        <label>par-2</label>
    </interactant>
    <organismsDiffer>false</organismsDiffer>
    <experiments>6</experiments>
</comment>
<comment type="subcellular location">
    <subcellularLocation>
        <location evidence="3">Cytoplasm</location>
    </subcellularLocation>
</comment>
<comment type="domain">
    <text evidence="3">Contains a pseudo-UCH domain. This ubiquitin C-terminal hydrolase (UCH)-like or ubiquitin specific protease (USP)-like domain is predicted to be catalytically inactive because it lacks the active site catalytic triad characteristic of thiol proteases, with residues at the equivalent structural positions that are incompatible with catalysis, and it cannot bind ubiquitin. It functions as a structural scaffold for intra- and intermolecular interactions in the complex.</text>
</comment>
<comment type="domain">
    <text evidence="3 5">The linker, or PAN3 interaction domain (PID), between the WD40 repeats and the pseudo-UCH domain mediates interaction with par-2/pan3.</text>
</comment>
<comment type="similarity">
    <text evidence="3">Belongs to the peptidase C19 family. PAN2 subfamily.</text>
</comment>
<dbReference type="EC" id="3.1.13.4" evidence="3"/>
<dbReference type="EMBL" id="CM002241">
    <property type="protein sequence ID" value="EDO65208.2"/>
    <property type="molecule type" value="Genomic_DNA"/>
</dbReference>
<dbReference type="RefSeq" id="XP_001728299.2">
    <property type="nucleotide sequence ID" value="XM_001728247.2"/>
</dbReference>
<dbReference type="PDB" id="4CZV">
    <property type="method" value="X-ray"/>
    <property type="resolution" value="2.10 A"/>
    <property type="chains" value="A/B=1-321"/>
</dbReference>
<dbReference type="PDB" id="4CZW">
    <property type="method" value="X-ray"/>
    <property type="resolution" value="2.60 A"/>
    <property type="chains" value="A=456-1100"/>
</dbReference>
<dbReference type="PDB" id="4CZX">
    <property type="method" value="X-ray"/>
    <property type="resolution" value="1.85 A"/>
    <property type="chains" value="A=1-321"/>
</dbReference>
<dbReference type="PDB" id="4CZY">
    <property type="method" value="X-ray"/>
    <property type="resolution" value="3.40 A"/>
    <property type="chains" value="A/C=1-351"/>
</dbReference>
<dbReference type="PDBsum" id="4CZV"/>
<dbReference type="PDBsum" id="4CZW"/>
<dbReference type="PDBsum" id="4CZX"/>
<dbReference type="PDBsum" id="4CZY"/>
<dbReference type="SMR" id="P0C581"/>
<dbReference type="DIP" id="DIP-61539N"/>
<dbReference type="FunCoup" id="P0C581">
    <property type="interactions" value="660"/>
</dbReference>
<dbReference type="IntAct" id="P0C581">
    <property type="interactions" value="1"/>
</dbReference>
<dbReference type="STRING" id="367110.P0C581"/>
<dbReference type="PaxDb" id="5141-EFNCRP00000004582"/>
<dbReference type="EnsemblFungi" id="EDO65208">
    <property type="protein sequence ID" value="EDO65208"/>
    <property type="gene ID" value="NCU10733"/>
</dbReference>
<dbReference type="GeneID" id="5847542"/>
<dbReference type="KEGG" id="ncr:NCU10733"/>
<dbReference type="VEuPathDB" id="FungiDB:NCU10733"/>
<dbReference type="HOGENOM" id="CLU_002369_1_0_1"/>
<dbReference type="InParanoid" id="P0C581"/>
<dbReference type="OrthoDB" id="16516at2759"/>
<dbReference type="EvolutionaryTrace" id="P0C581"/>
<dbReference type="Proteomes" id="UP000001805">
    <property type="component" value="Chromosome 5, Linkage Group VI"/>
</dbReference>
<dbReference type="GO" id="GO:0000932">
    <property type="term" value="C:P-body"/>
    <property type="evidence" value="ECO:0000318"/>
    <property type="project" value="GO_Central"/>
</dbReference>
<dbReference type="GO" id="GO:0031251">
    <property type="term" value="C:PAN complex"/>
    <property type="evidence" value="ECO:0000318"/>
    <property type="project" value="GO_Central"/>
</dbReference>
<dbReference type="GO" id="GO:0046872">
    <property type="term" value="F:metal ion binding"/>
    <property type="evidence" value="ECO:0007669"/>
    <property type="project" value="UniProtKB-KW"/>
</dbReference>
<dbReference type="GO" id="GO:0003676">
    <property type="term" value="F:nucleic acid binding"/>
    <property type="evidence" value="ECO:0007669"/>
    <property type="project" value="InterPro"/>
</dbReference>
<dbReference type="GO" id="GO:0004535">
    <property type="term" value="F:poly(A)-specific ribonuclease activity"/>
    <property type="evidence" value="ECO:0007669"/>
    <property type="project" value="UniProtKB-UniRule"/>
</dbReference>
<dbReference type="GO" id="GO:0006397">
    <property type="term" value="P:mRNA processing"/>
    <property type="evidence" value="ECO:0007669"/>
    <property type="project" value="UniProtKB-KW"/>
</dbReference>
<dbReference type="GO" id="GO:0000289">
    <property type="term" value="P:nuclear-transcribed mRNA poly(A) tail shortening"/>
    <property type="evidence" value="ECO:0000318"/>
    <property type="project" value="GO_Central"/>
</dbReference>
<dbReference type="CDD" id="cd06143">
    <property type="entry name" value="PAN2_exo"/>
    <property type="match status" value="1"/>
</dbReference>
<dbReference type="CDD" id="cd02672">
    <property type="entry name" value="Peptidase_C19P"/>
    <property type="match status" value="1"/>
</dbReference>
<dbReference type="FunFam" id="2.130.10.10:FF:000459">
    <property type="entry name" value="PAN2-PAN3 deadenylation complex catalytic subunit PAN2"/>
    <property type="match status" value="1"/>
</dbReference>
<dbReference type="FunFam" id="3.30.420.10:FF:000028">
    <property type="entry name" value="PAN2-PAN3 deadenylation complex catalytic subunit PAN2"/>
    <property type="match status" value="1"/>
</dbReference>
<dbReference type="Gene3D" id="3.90.70.10">
    <property type="entry name" value="Cysteine proteinases"/>
    <property type="match status" value="1"/>
</dbReference>
<dbReference type="Gene3D" id="3.30.420.10">
    <property type="entry name" value="Ribonuclease H-like superfamily/Ribonuclease H"/>
    <property type="match status" value="1"/>
</dbReference>
<dbReference type="Gene3D" id="2.130.10.10">
    <property type="entry name" value="YVTN repeat-like/Quinoprotein amine dehydrogenase"/>
    <property type="match status" value="1"/>
</dbReference>
<dbReference type="HAMAP" id="MF_03182">
    <property type="entry name" value="PAN2"/>
    <property type="match status" value="1"/>
</dbReference>
<dbReference type="InterPro" id="IPR013520">
    <property type="entry name" value="Exonuclease_RNaseT/DNA_pol3"/>
</dbReference>
<dbReference type="InterPro" id="IPR030843">
    <property type="entry name" value="PAN2"/>
</dbReference>
<dbReference type="InterPro" id="IPR050785">
    <property type="entry name" value="PAN2-PAN3_catalytic_subunit"/>
</dbReference>
<dbReference type="InterPro" id="IPR048841">
    <property type="entry name" value="PAN2_N"/>
</dbReference>
<dbReference type="InterPro" id="IPR028881">
    <property type="entry name" value="PAN2_UCH_dom"/>
</dbReference>
<dbReference type="InterPro" id="IPR038765">
    <property type="entry name" value="Papain-like_cys_pep_sf"/>
</dbReference>
<dbReference type="InterPro" id="IPR011047">
    <property type="entry name" value="Quinoprotein_ADH-like_sf"/>
</dbReference>
<dbReference type="InterPro" id="IPR012337">
    <property type="entry name" value="RNaseH-like_sf"/>
</dbReference>
<dbReference type="InterPro" id="IPR036397">
    <property type="entry name" value="RNaseH_sf"/>
</dbReference>
<dbReference type="InterPro" id="IPR028889">
    <property type="entry name" value="USP_dom"/>
</dbReference>
<dbReference type="InterPro" id="IPR015943">
    <property type="entry name" value="WD40/YVTN_repeat-like_dom_sf"/>
</dbReference>
<dbReference type="PANTHER" id="PTHR15728">
    <property type="entry name" value="DEADENYLATION COMPLEX CATALYTIC SUBUNIT PAN2"/>
    <property type="match status" value="1"/>
</dbReference>
<dbReference type="PANTHER" id="PTHR15728:SF0">
    <property type="entry name" value="PAN2-PAN3 DEADENYLATION COMPLEX CATALYTIC SUBUNIT PAN2"/>
    <property type="match status" value="1"/>
</dbReference>
<dbReference type="Pfam" id="PF20770">
    <property type="entry name" value="PAN2_N"/>
    <property type="match status" value="1"/>
</dbReference>
<dbReference type="Pfam" id="PF00929">
    <property type="entry name" value="RNase_T"/>
    <property type="match status" value="1"/>
</dbReference>
<dbReference type="Pfam" id="PF13423">
    <property type="entry name" value="UCH_1"/>
    <property type="match status" value="1"/>
</dbReference>
<dbReference type="SMART" id="SM00479">
    <property type="entry name" value="EXOIII"/>
    <property type="match status" value="1"/>
</dbReference>
<dbReference type="SUPFAM" id="SSF54001">
    <property type="entry name" value="Cysteine proteinases"/>
    <property type="match status" value="1"/>
</dbReference>
<dbReference type="SUPFAM" id="SSF50998">
    <property type="entry name" value="Quinoprotein alcohol dehydrogenase-like"/>
    <property type="match status" value="1"/>
</dbReference>
<dbReference type="SUPFAM" id="SSF53098">
    <property type="entry name" value="Ribonuclease H-like"/>
    <property type="match status" value="1"/>
</dbReference>
<dbReference type="PROSITE" id="PS50235">
    <property type="entry name" value="USP_3"/>
    <property type="match status" value="1"/>
</dbReference>
<evidence type="ECO:0000250" key="1"/>
<evidence type="ECO:0000250" key="2">
    <source>
        <dbReference type="UniProtKB" id="O95453"/>
    </source>
</evidence>
<evidence type="ECO:0000255" key="3">
    <source>
        <dbReference type="HAMAP-Rule" id="MF_03182"/>
    </source>
</evidence>
<evidence type="ECO:0000256" key="4">
    <source>
        <dbReference type="SAM" id="MobiDB-lite"/>
    </source>
</evidence>
<evidence type="ECO:0000269" key="5">
    <source>
    </source>
</evidence>
<evidence type="ECO:0000305" key="6">
    <source>
    </source>
</evidence>
<evidence type="ECO:0007744" key="7">
    <source>
        <dbReference type="PDB" id="4CZW"/>
    </source>
</evidence>
<evidence type="ECO:0007829" key="8">
    <source>
        <dbReference type="PDB" id="4CZV"/>
    </source>
</evidence>
<evidence type="ECO:0007829" key="9">
    <source>
        <dbReference type="PDB" id="4CZW"/>
    </source>
</evidence>
<evidence type="ECO:0007829" key="10">
    <source>
        <dbReference type="PDB" id="4CZX"/>
    </source>
</evidence>
<keyword id="KW-0002">3D-structure</keyword>
<keyword id="KW-0963">Cytoplasm</keyword>
<keyword id="KW-0269">Exonuclease</keyword>
<keyword id="KW-0378">Hydrolase</keyword>
<keyword id="KW-0479">Metal-binding</keyword>
<keyword id="KW-0507">mRNA processing</keyword>
<keyword id="KW-0540">Nuclease</keyword>
<keyword id="KW-1185">Reference proteome</keyword>
<keyword id="KW-0677">Repeat</keyword>
<keyword id="KW-0853">WD repeat</keyword>
<proteinExistence type="evidence at protein level"/>
<sequence length="1310" mass="143936">MDSRDWTQLGCVAYPSPIHPDYHAGPASTIAFDNQDELLWIGTQKGFAGSFIGRELKRFTAFRIHPETDGPLRQFLFVDKGVIFLGSRSVYMAARSGVPIWSIRHESMQDLRAMSFTSKGTSEILVAGWQNKMLVIDVNKGEVVKELPTQDQYSFLKMSRYICAATNKGTVNILDPITFTIKKQWQAHGAFINDLDTSNDFIVTCGGSHRQTHNTPAILDPYVKVFDLKNMSAMNPVPFAPLAAHVRMHPRMLTTAIVVNQAGQIHVTDLLNPSNSQVCYTQPQGVVLHFDVSRTGEGKALADNKHNTYVWGSPNKIQFTEIGIPPRLPDPPQPSLLPPDPDMLEELPLSRIGLPYYREQLFSALPPDIISDVGAPPQQIDPNILSTLTKTDWGYIGPNKTGLQRNQYMDTRSTMKTSNTIRAPKFLSEKARESQTGSEDNTLATNETAMMTPNNDHWSLRPEAPPEYRICEIKYSKFGVDDFDFGFFNNTPYPGLENNITNSYANSLLQVMHYTPLLRNMALQHAATACLADPCLLCELGYVFDMLQKGEGPSCHATNMLRALNHTSNASVSGVLEDIAKDKNPSTLVKNLTMFLFDKISQDYKGTPPISTELERTLFKLNQPPNPLDLVKRLLETDARYQIKCMHCQHVSPRTATTFVNKLCYPAAKPNIRGMKAQRITFSQVLKAGLENEAVNKGYCTKCQRYQNLDQRKIIFNIPAVLALCTEITTAEHRKLWSTPGWLPEEIGIIVDQGHVYCYEGDDLKLHLNRGIHNITVYSLVGTVVNVETKSPQKSHLVATVNVGRAEPESKDQDRWHLFNDFSVRGISKVEALTFNAAWKMPVVVMFQVKAANHRFNMDWKTRLDTSVLFRDNNPHALKTYELLDRETEIPGPDTVIAIDTEFIRLKEREIHIDEDGKSKTIRPISHAIARASVVRGQGSREGVAFIDDYIHIKETIVDYLTEWSGITPTDLDPINSQRNLVSPKTAYKKLWVLVNLGCKFLGHGLSQDFRVINIQVPRNQVIDTSIIFMKPPSQRKISLAFLAWYLLKEDIQQNTHDSIEDAQTALKLYRKYEEFMANGSFHDVLEALYKKGKTLNFKPPRISTGAAKDAGFGAVHRVGTPPVPAPGTTEGSFEISNSSTATTGGSALSATGGMGSASASSSMPSTPVRKPIGLGGPFTVAGVVKPSPATSLDNFGAGAVGTGITTAAATMGGGYGGYGTDGAYWGGPNDMAPTSMIGGSAFIPAKFPPGPPETRGFIPYRPQVLLAEREAAAAAAAAAAAAAANNDVGGRGGVACGNGGAGGEQGKQE</sequence>
<gene>
    <name type="primary">par-1</name>
    <name evidence="3" type="synonym">pan2</name>
    <name type="ORF">NCU04792</name>
    <name type="ORF">NCU10733</name>
</gene>
<protein>
    <recommendedName>
        <fullName evidence="3">PAN2-PAN3 deadenylation complex catalytic subunit pan2</fullName>
        <ecNumber evidence="3">3.1.13.4</ecNumber>
    </recommendedName>
    <alternativeName>
        <fullName evidence="3">PAB1P-dependent poly(A)-specific ribonuclease</fullName>
    </alternativeName>
    <alternativeName>
        <fullName evidence="3">Poly(A)-nuclease deadenylation complex subunit 2</fullName>
        <shortName evidence="3">PAN deadenylation complex subunit 2</shortName>
    </alternativeName>
</protein>
<feature type="chain" id="PRO_0000295351" description="PAN2-PAN3 deadenylation complex catalytic subunit pan2">
    <location>
        <begin position="1"/>
        <end position="1310"/>
    </location>
</feature>
<feature type="repeat" description="WD 1" evidence="3">
    <location>
        <begin position="22"/>
        <end position="61"/>
    </location>
</feature>
<feature type="repeat" description="WD 2" evidence="3">
    <location>
        <begin position="67"/>
        <end position="105"/>
    </location>
</feature>
<feature type="repeat" description="WD 3" evidence="3">
    <location>
        <begin position="106"/>
        <end position="144"/>
    </location>
</feature>
<feature type="repeat" description="WD 4" evidence="3">
    <location>
        <begin position="145"/>
        <end position="184"/>
    </location>
</feature>
<feature type="domain" description="USP" evidence="3">
    <location>
        <begin position="463"/>
        <end position="850"/>
    </location>
</feature>
<feature type="domain" description="Exonuclease" evidence="3">
    <location>
        <begin position="897"/>
        <end position="1070"/>
    </location>
</feature>
<feature type="region of interest" description="Linker" evidence="3 6">
    <location>
        <begin position="318"/>
        <end position="463"/>
    </location>
</feature>
<feature type="region of interest" description="Disordered" evidence="4">
    <location>
        <begin position="1121"/>
        <end position="1169"/>
    </location>
</feature>
<feature type="compositionally biased region" description="Low complexity" evidence="4">
    <location>
        <begin position="1139"/>
        <end position="1168"/>
    </location>
</feature>
<feature type="binding site" evidence="5 7">
    <location>
        <position position="525"/>
    </location>
    <ligand>
        <name>Zn(2+)</name>
        <dbReference type="ChEBI" id="CHEBI:29105"/>
        <label>1</label>
    </ligand>
</feature>
<feature type="binding site" evidence="5 7">
    <location>
        <position position="530"/>
    </location>
    <ligand>
        <name>Zn(2+)</name>
        <dbReference type="ChEBI" id="CHEBI:29105"/>
        <label>1</label>
    </ligand>
</feature>
<feature type="binding site" evidence="5 7">
    <location>
        <position position="535"/>
    </location>
    <ligand>
        <name>Zn(2+)</name>
        <dbReference type="ChEBI" id="CHEBI:29105"/>
        <label>1</label>
    </ligand>
</feature>
<feature type="binding site" evidence="5 7">
    <location>
        <position position="538"/>
    </location>
    <ligand>
        <name>Zn(2+)</name>
        <dbReference type="ChEBI" id="CHEBI:29105"/>
        <label>1</label>
    </ligand>
</feature>
<feature type="binding site" evidence="5 7">
    <location>
        <position position="645"/>
    </location>
    <ligand>
        <name>Zn(2+)</name>
        <dbReference type="ChEBI" id="CHEBI:29105"/>
        <label>2</label>
    </ligand>
</feature>
<feature type="binding site" evidence="5 7">
    <location>
        <position position="648"/>
    </location>
    <ligand>
        <name>Zn(2+)</name>
        <dbReference type="ChEBI" id="CHEBI:29105"/>
        <label>2</label>
    </ligand>
</feature>
<feature type="binding site" evidence="5 7">
    <location>
        <position position="700"/>
    </location>
    <ligand>
        <name>Zn(2+)</name>
        <dbReference type="ChEBI" id="CHEBI:29105"/>
        <label>2</label>
    </ligand>
</feature>
<feature type="binding site" evidence="5 7">
    <location>
        <position position="703"/>
    </location>
    <ligand>
        <name>Zn(2+)</name>
        <dbReference type="ChEBI" id="CHEBI:29105"/>
        <label>2</label>
    </ligand>
</feature>
<feature type="binding site" evidence="2 3">
    <location>
        <position position="900"/>
    </location>
    <ligand>
        <name>a divalent metal cation</name>
        <dbReference type="ChEBI" id="CHEBI:60240"/>
        <note>catalytic</note>
    </ligand>
</feature>
<feature type="binding site" evidence="2 3">
    <location>
        <position position="902"/>
    </location>
    <ligand>
        <name>a divalent metal cation</name>
        <dbReference type="ChEBI" id="CHEBI:60240"/>
        <note>catalytic</note>
    </ligand>
</feature>
<feature type="binding site" evidence="2 3">
    <location>
        <position position="1009"/>
    </location>
    <ligand>
        <name>a divalent metal cation</name>
        <dbReference type="ChEBI" id="CHEBI:60240"/>
        <note>catalytic</note>
    </ligand>
</feature>
<feature type="binding site" evidence="2 3">
    <location>
        <position position="1062"/>
    </location>
    <ligand>
        <name>a divalent metal cation</name>
        <dbReference type="ChEBI" id="CHEBI:60240"/>
        <note>catalytic</note>
    </ligand>
</feature>
<feature type="turn" evidence="10">
    <location>
        <begin position="3"/>
        <end position="5"/>
    </location>
</feature>
<feature type="strand" evidence="10">
    <location>
        <begin position="7"/>
        <end position="13"/>
    </location>
</feature>
<feature type="helix" evidence="10">
    <location>
        <begin position="22"/>
        <end position="24"/>
    </location>
</feature>
<feature type="strand" evidence="10">
    <location>
        <begin position="28"/>
        <end position="32"/>
    </location>
</feature>
<feature type="strand" evidence="10">
    <location>
        <begin position="38"/>
        <end position="42"/>
    </location>
</feature>
<feature type="strand" evidence="10">
    <location>
        <begin position="46"/>
        <end position="52"/>
    </location>
</feature>
<feature type="turn" evidence="10">
    <location>
        <begin position="53"/>
        <end position="56"/>
    </location>
</feature>
<feature type="strand" evidence="10">
    <location>
        <begin position="57"/>
        <end position="63"/>
    </location>
</feature>
<feature type="helix" evidence="10">
    <location>
        <begin position="67"/>
        <end position="69"/>
    </location>
</feature>
<feature type="strand" evidence="10">
    <location>
        <begin position="74"/>
        <end position="77"/>
    </location>
</feature>
<feature type="strand" evidence="10">
    <location>
        <begin position="82"/>
        <end position="85"/>
    </location>
</feature>
<feature type="strand" evidence="10">
    <location>
        <begin position="90"/>
        <end position="93"/>
    </location>
</feature>
<feature type="strand" evidence="10">
    <location>
        <begin position="99"/>
        <end position="103"/>
    </location>
</feature>
<feature type="strand" evidence="10">
    <location>
        <begin position="109"/>
        <end position="116"/>
    </location>
</feature>
<feature type="strand" evidence="10">
    <location>
        <begin position="122"/>
        <end position="137"/>
    </location>
</feature>
<feature type="turn" evidence="10">
    <location>
        <begin position="138"/>
        <end position="141"/>
    </location>
</feature>
<feature type="strand" evidence="10">
    <location>
        <begin position="142"/>
        <end position="148"/>
    </location>
</feature>
<feature type="strand" evidence="10">
    <location>
        <begin position="153"/>
        <end position="166"/>
    </location>
</feature>
<feature type="strand" evidence="10">
    <location>
        <begin position="169"/>
        <end position="174"/>
    </location>
</feature>
<feature type="turn" evidence="10">
    <location>
        <begin position="176"/>
        <end position="178"/>
    </location>
</feature>
<feature type="strand" evidence="10">
    <location>
        <begin position="181"/>
        <end position="186"/>
    </location>
</feature>
<feature type="strand" evidence="10">
    <location>
        <begin position="188"/>
        <end position="197"/>
    </location>
</feature>
<feature type="strand" evidence="10">
    <location>
        <begin position="199"/>
        <end position="208"/>
    </location>
</feature>
<feature type="strand" evidence="8">
    <location>
        <begin position="213"/>
        <end position="215"/>
    </location>
</feature>
<feature type="strand" evidence="10">
    <location>
        <begin position="221"/>
        <end position="227"/>
    </location>
</feature>
<feature type="turn" evidence="10">
    <location>
        <begin position="228"/>
        <end position="231"/>
    </location>
</feature>
<feature type="strand" evidence="10">
    <location>
        <begin position="245"/>
        <end position="248"/>
    </location>
</feature>
<feature type="strand" evidence="10">
    <location>
        <begin position="250"/>
        <end position="252"/>
    </location>
</feature>
<feature type="strand" evidence="10">
    <location>
        <begin position="255"/>
        <end position="259"/>
    </location>
</feature>
<feature type="strand" evidence="10">
    <location>
        <begin position="263"/>
        <end position="271"/>
    </location>
</feature>
<feature type="strand" evidence="10">
    <location>
        <begin position="275"/>
        <end position="280"/>
    </location>
</feature>
<feature type="strand" evidence="10">
    <location>
        <begin position="287"/>
        <end position="292"/>
    </location>
</feature>
<feature type="strand" evidence="10">
    <location>
        <begin position="299"/>
        <end position="303"/>
    </location>
</feature>
<feature type="strand" evidence="10">
    <location>
        <begin position="306"/>
        <end position="312"/>
    </location>
</feature>
<feature type="helix" evidence="9">
    <location>
        <begin position="458"/>
        <end position="460"/>
    </location>
</feature>
<feature type="strand" evidence="9">
    <location>
        <begin position="461"/>
        <end position="463"/>
    </location>
</feature>
<feature type="turn" evidence="9">
    <location>
        <begin position="466"/>
        <end position="468"/>
    </location>
</feature>
<feature type="helix" evidence="9">
    <location>
        <begin position="480"/>
        <end position="482"/>
    </location>
</feature>
<feature type="helix" evidence="9">
    <location>
        <begin position="485"/>
        <end position="487"/>
    </location>
</feature>
<feature type="strand" evidence="9">
    <location>
        <begin position="491"/>
        <end position="493"/>
    </location>
</feature>
<feature type="helix" evidence="9">
    <location>
        <begin position="503"/>
        <end position="505"/>
    </location>
</feature>
<feature type="helix" evidence="9">
    <location>
        <begin position="506"/>
        <end position="513"/>
    </location>
</feature>
<feature type="helix" evidence="9">
    <location>
        <begin position="516"/>
        <end position="526"/>
    </location>
</feature>
<feature type="helix" evidence="9">
    <location>
        <begin position="536"/>
        <end position="549"/>
    </location>
</feature>
<feature type="strand" evidence="9">
    <location>
        <begin position="552"/>
        <end position="555"/>
    </location>
</feature>
<feature type="helix" evidence="9">
    <location>
        <begin position="558"/>
        <end position="564"/>
    </location>
</feature>
<feature type="turn" evidence="9">
    <location>
        <begin position="571"/>
        <end position="574"/>
    </location>
</feature>
<feature type="turn" evidence="9">
    <location>
        <begin position="577"/>
        <end position="579"/>
    </location>
</feature>
<feature type="helix" evidence="9">
    <location>
        <begin position="585"/>
        <end position="604"/>
    </location>
</feature>
<feature type="helix" evidence="9">
    <location>
        <begin position="613"/>
        <end position="618"/>
    </location>
</feature>
<feature type="helix" evidence="9">
    <location>
        <begin position="627"/>
        <end position="635"/>
    </location>
</feature>
<feature type="strand" evidence="9">
    <location>
        <begin position="638"/>
        <end position="645"/>
    </location>
</feature>
<feature type="turn" evidence="9">
    <location>
        <begin position="646"/>
        <end position="648"/>
    </location>
</feature>
<feature type="strand" evidence="9">
    <location>
        <begin position="651"/>
        <end position="656"/>
    </location>
</feature>
<feature type="strand" evidence="9">
    <location>
        <begin position="659"/>
        <end position="662"/>
    </location>
</feature>
<feature type="helix" evidence="9">
    <location>
        <begin position="682"/>
        <end position="690"/>
    </location>
</feature>
<feature type="strand" evidence="9">
    <location>
        <begin position="693"/>
        <end position="700"/>
    </location>
</feature>
<feature type="turn" evidence="9">
    <location>
        <begin position="701"/>
        <end position="704"/>
    </location>
</feature>
<feature type="strand" evidence="9">
    <location>
        <begin position="705"/>
        <end position="717"/>
    </location>
</feature>
<feature type="strand" evidence="9">
    <location>
        <begin position="720"/>
        <end position="725"/>
    </location>
</feature>
<feature type="helix" evidence="9">
    <location>
        <begin position="731"/>
        <end position="737"/>
    </location>
</feature>
<feature type="strand" evidence="9">
    <location>
        <begin position="745"/>
        <end position="752"/>
    </location>
</feature>
<feature type="strand" evidence="9">
    <location>
        <begin position="754"/>
        <end position="760"/>
    </location>
</feature>
<feature type="helix" evidence="9">
    <location>
        <begin position="761"/>
        <end position="769"/>
    </location>
</feature>
<feature type="strand" evidence="9">
    <location>
        <begin position="776"/>
        <end position="789"/>
    </location>
</feature>
<feature type="turn" evidence="9">
    <location>
        <begin position="790"/>
        <end position="793"/>
    </location>
</feature>
<feature type="strand" evidence="9">
    <location>
        <begin position="794"/>
        <end position="802"/>
    </location>
</feature>
<feature type="turn" evidence="9">
    <location>
        <begin position="803"/>
        <end position="806"/>
    </location>
</feature>
<feature type="strand" evidence="9">
    <location>
        <begin position="816"/>
        <end position="820"/>
    </location>
</feature>
<feature type="strand" evidence="9">
    <location>
        <begin position="823"/>
        <end position="826"/>
    </location>
</feature>
<feature type="helix" evidence="9">
    <location>
        <begin position="829"/>
        <end position="832"/>
    </location>
</feature>
<feature type="turn" evidence="9">
    <location>
        <begin position="837"/>
        <end position="839"/>
    </location>
</feature>
<feature type="strand" evidence="9">
    <location>
        <begin position="840"/>
        <end position="849"/>
    </location>
</feature>
<feature type="helix" evidence="9">
    <location>
        <begin position="850"/>
        <end position="852"/>
    </location>
</feature>
<feature type="helix" evidence="9">
    <location>
        <begin position="859"/>
        <end position="862"/>
    </location>
</feature>
<feature type="helix" evidence="9">
    <location>
        <begin position="867"/>
        <end position="870"/>
    </location>
</feature>
<feature type="turn" evidence="9">
    <location>
        <begin position="886"/>
        <end position="888"/>
    </location>
</feature>
<feature type="strand" evidence="9">
    <location>
        <begin position="896"/>
        <end position="906"/>
    </location>
</feature>
<feature type="strand" evidence="9">
    <location>
        <begin position="926"/>
        <end position="936"/>
    </location>
</feature>
<feature type="turn" evidence="9">
    <location>
        <begin position="940"/>
        <end position="943"/>
    </location>
</feature>
<feature type="strand" evidence="9">
    <location>
        <begin position="945"/>
        <end position="951"/>
    </location>
</feature>
<feature type="strand" evidence="9">
    <location>
        <begin position="957"/>
        <end position="959"/>
    </location>
</feature>
<feature type="helix" evidence="9">
    <location>
        <begin position="962"/>
        <end position="965"/>
    </location>
</feature>
<feature type="helix" evidence="9">
    <location>
        <begin position="969"/>
        <end position="972"/>
    </location>
</feature>
<feature type="turn" evidence="9">
    <location>
        <begin position="974"/>
        <end position="976"/>
    </location>
</feature>
<feature type="strand" evidence="9">
    <location>
        <begin position="979"/>
        <end position="982"/>
    </location>
</feature>
<feature type="helix" evidence="9">
    <location>
        <begin position="984"/>
        <end position="996"/>
    </location>
</feature>
<feature type="strand" evidence="9">
    <location>
        <begin position="1000"/>
        <end position="1005"/>
    </location>
</feature>
<feature type="helix" evidence="9">
    <location>
        <begin position="1006"/>
        <end position="1013"/>
    </location>
</feature>
<feature type="helix" evidence="9">
    <location>
        <begin position="1019"/>
        <end position="1021"/>
    </location>
</feature>
<feature type="strand" evidence="9">
    <location>
        <begin position="1022"/>
        <end position="1024"/>
    </location>
</feature>
<feature type="helix" evidence="9">
    <location>
        <begin position="1025"/>
        <end position="1028"/>
    </location>
</feature>
<feature type="turn" evidence="9">
    <location>
        <begin position="1032"/>
        <end position="1034"/>
    </location>
</feature>
<feature type="helix" evidence="9">
    <location>
        <begin position="1040"/>
        <end position="1047"/>
    </location>
</feature>
<feature type="strand" evidence="9">
    <location>
        <begin position="1054"/>
        <end position="1056"/>
    </location>
</feature>
<feature type="helix" evidence="9">
    <location>
        <begin position="1059"/>
        <end position="1078"/>
    </location>
</feature>
<feature type="helix" evidence="9">
    <location>
        <begin position="1082"/>
        <end position="1089"/>
    </location>
</feature>
<organism>
    <name type="scientific">Neurospora crassa (strain ATCC 24698 / 74-OR23-1A / CBS 708.71 / DSM 1257 / FGSC 987)</name>
    <dbReference type="NCBI Taxonomy" id="367110"/>
    <lineage>
        <taxon>Eukaryota</taxon>
        <taxon>Fungi</taxon>
        <taxon>Dikarya</taxon>
        <taxon>Ascomycota</taxon>
        <taxon>Pezizomycotina</taxon>
        <taxon>Sordariomycetes</taxon>
        <taxon>Sordariomycetidae</taxon>
        <taxon>Sordariales</taxon>
        <taxon>Sordariaceae</taxon>
        <taxon>Neurospora</taxon>
    </lineage>
</organism>
<accession>P0C581</accession>
<accession>A7UWG8</accession>
<accession>Q7S6P3</accession>